<dbReference type="EMBL" id="Z67753">
    <property type="protein sequence ID" value="CAA91679.1"/>
    <property type="molecule type" value="Genomic_DNA"/>
</dbReference>
<dbReference type="PIR" id="S78306">
    <property type="entry name" value="S78306"/>
</dbReference>
<dbReference type="RefSeq" id="NP_043647.1">
    <property type="nucleotide sequence ID" value="NC_001713.1"/>
</dbReference>
<dbReference type="SMR" id="P49481"/>
<dbReference type="GeneID" id="801801"/>
<dbReference type="GO" id="GO:0009535">
    <property type="term" value="C:chloroplast thylakoid membrane"/>
    <property type="evidence" value="ECO:0007669"/>
    <property type="project" value="UniProtKB-SubCell"/>
</dbReference>
<dbReference type="GO" id="GO:0009538">
    <property type="term" value="C:photosystem I reaction center"/>
    <property type="evidence" value="ECO:0007669"/>
    <property type="project" value="InterPro"/>
</dbReference>
<dbReference type="GO" id="GO:0015979">
    <property type="term" value="P:photosynthesis"/>
    <property type="evidence" value="ECO:0007669"/>
    <property type="project" value="UniProtKB-KW"/>
</dbReference>
<dbReference type="Gene3D" id="3.30.1470.10">
    <property type="entry name" value="Photosystem I PsaD, reaction center subunit II"/>
    <property type="match status" value="1"/>
</dbReference>
<dbReference type="InterPro" id="IPR003685">
    <property type="entry name" value="PsaD"/>
</dbReference>
<dbReference type="InterPro" id="IPR036579">
    <property type="entry name" value="PsaD_sf"/>
</dbReference>
<dbReference type="PANTHER" id="PTHR31982:SF5">
    <property type="entry name" value="PHOTOSYSTEM I REACTION CENTER SUBUNIT II, CHLOROPLASTIC"/>
    <property type="match status" value="1"/>
</dbReference>
<dbReference type="PANTHER" id="PTHR31982">
    <property type="entry name" value="PHOTOSYSTEM I REACTION CENTER SUBUNIT II-1, CHLOROPLASTIC-RELATED"/>
    <property type="match status" value="1"/>
</dbReference>
<dbReference type="Pfam" id="PF02531">
    <property type="entry name" value="PsaD"/>
    <property type="match status" value="1"/>
</dbReference>
<dbReference type="SUPFAM" id="SSF64234">
    <property type="entry name" value="Photosystem I subunit PsaD"/>
    <property type="match status" value="1"/>
</dbReference>
<sequence>MTLNLQTPFPTFGGSTGGWLRAAEVEEKYAITWTSKKEQIFEMPTGGAAIMRNGENLLYLARKEQCLALGTQLRTFKINDYKIYRIFPSGEVQYLHPKDGVFPEKVNPGRTSVNSRGFSIGKNPNPASIKFSGITTYES</sequence>
<organism>
    <name type="scientific">Trieres chinensis</name>
    <name type="common">Marine centric diatom</name>
    <name type="synonym">Odontella sinensis</name>
    <dbReference type="NCBI Taxonomy" id="1514140"/>
    <lineage>
        <taxon>Eukaryota</taxon>
        <taxon>Sar</taxon>
        <taxon>Stramenopiles</taxon>
        <taxon>Ochrophyta</taxon>
        <taxon>Bacillariophyta</taxon>
        <taxon>Mediophyceae</taxon>
        <taxon>Biddulphiophycidae</taxon>
        <taxon>Eupodiscales</taxon>
        <taxon>Parodontellaceae</taxon>
        <taxon>Trieres</taxon>
    </lineage>
</organism>
<comment type="function">
    <text>PsaD can form complexes with ferredoxin and ferredoxin-oxidoreductase in photosystem I (PS I) reaction center.</text>
</comment>
<comment type="subcellular location">
    <subcellularLocation>
        <location evidence="1">Plastid</location>
        <location evidence="1">Chloroplast thylakoid membrane</location>
        <topology evidence="1">Peripheral membrane protein</topology>
        <orientation evidence="1">Stromal side</orientation>
    </subcellularLocation>
</comment>
<comment type="similarity">
    <text evidence="2">Belongs to the PsaD family.</text>
</comment>
<evidence type="ECO:0000250" key="1"/>
<evidence type="ECO:0000305" key="2"/>
<accession>P49481</accession>
<feature type="chain" id="PRO_0000206045" description="Photosystem I reaction center subunit II">
    <location>
        <begin position="1"/>
        <end position="139"/>
    </location>
</feature>
<gene>
    <name type="primary">psaD</name>
</gene>
<protein>
    <recommendedName>
        <fullName>Photosystem I reaction center subunit II</fullName>
    </recommendedName>
    <alternativeName>
        <fullName>Photosystem I 16 kDa polypeptide</fullName>
        <shortName>PSI-D</shortName>
    </alternativeName>
</protein>
<proteinExistence type="inferred from homology"/>
<reference key="1">
    <citation type="journal article" date="1995" name="Plant Mol. Biol. Rep.">
        <title>The chloroplast genome of a chlorophyll a+c-containing alga, Odontella sinensis.</title>
        <authorList>
            <person name="Kowallik K.V."/>
            <person name="Stoebe B."/>
            <person name="Schaffran I."/>
            <person name="Kroth-Pancic P."/>
            <person name="Freier U."/>
        </authorList>
    </citation>
    <scope>NUCLEOTIDE SEQUENCE [LARGE SCALE GENOMIC DNA]</scope>
</reference>
<geneLocation type="chloroplast"/>
<name>PSAD_TRICV</name>
<keyword id="KW-0150">Chloroplast</keyword>
<keyword id="KW-0472">Membrane</keyword>
<keyword id="KW-0602">Photosynthesis</keyword>
<keyword id="KW-0603">Photosystem I</keyword>
<keyword id="KW-0934">Plastid</keyword>
<keyword id="KW-0793">Thylakoid</keyword>